<name>CT02_CONPE</name>
<accession>Q9BPG8</accession>
<organism>
    <name type="scientific">Conus pennaceus</name>
    <name type="common">Feathered cone</name>
    <name type="synonym">Conus episcopus</name>
    <dbReference type="NCBI Taxonomy" id="37335"/>
    <lineage>
        <taxon>Eukaryota</taxon>
        <taxon>Metazoa</taxon>
        <taxon>Spiralia</taxon>
        <taxon>Lophotrochozoa</taxon>
        <taxon>Mollusca</taxon>
        <taxon>Gastropoda</taxon>
        <taxon>Caenogastropoda</taxon>
        <taxon>Neogastropoda</taxon>
        <taxon>Conoidea</taxon>
        <taxon>Conidae</taxon>
        <taxon>Conus</taxon>
        <taxon>Darioconus</taxon>
    </lineage>
</organism>
<feature type="signal peptide" evidence="2">
    <location>
        <begin position="1"/>
        <end position="19"/>
    </location>
</feature>
<feature type="propeptide" id="PRO_0000274074" evidence="1">
    <location>
        <begin position="20"/>
        <end position="49"/>
    </location>
</feature>
<feature type="peptide" id="PRO_0000274075" description="Conotoxin Pn-B02">
    <location>
        <begin position="51"/>
        <end position="61"/>
    </location>
</feature>
<feature type="modified residue" description="Alanine amide" evidence="1">
    <location>
        <position position="61"/>
    </location>
</feature>
<protein>
    <recommendedName>
        <fullName evidence="5">Conotoxin Pn-B02</fullName>
    </recommendedName>
</protein>
<evidence type="ECO:0000250" key="1"/>
<evidence type="ECO:0000255" key="2"/>
<evidence type="ECO:0000305" key="3"/>
<evidence type="ECO:0000305" key="4">
    <source>
    </source>
</evidence>
<evidence type="ECO:0000312" key="5">
    <source>
        <dbReference type="EMBL" id="AAG60388.1"/>
    </source>
</evidence>
<proteinExistence type="inferred from homology"/>
<comment type="subcellular location">
    <subcellularLocation>
        <location evidence="4">Secreted</location>
    </subcellularLocation>
</comment>
<comment type="tissue specificity">
    <text evidence="4">Expressed by the venom duct.</text>
</comment>
<comment type="domain">
    <text evidence="3">The cysteine framework is V (CC-CC).</text>
</comment>
<comment type="PTM">
    <text evidence="3">Contains 2 disulfide bonds that can be either 'C1-C3, C2-C4' or 'C1-C4, C2-C3', since these disulfide connectivities have been observed for conotoxins with cysteine framework V (for examples, see AC P0DQQ7 and AC P81755).</text>
</comment>
<comment type="similarity">
    <text evidence="3">Belongs to the conotoxin T superfamily.</text>
</comment>
<reference key="1">
    <citation type="journal article" date="2001" name="Mol. Biol. Evol.">
        <title>Mechanisms for evolving hypervariability: the case of conopeptides.</title>
        <authorList>
            <person name="Conticello S.G."/>
            <person name="Gilad Y."/>
            <person name="Avidan N."/>
            <person name="Ben-Asher E."/>
            <person name="Levy Z."/>
            <person name="Fainzilber M."/>
        </authorList>
    </citation>
    <scope>NUCLEOTIDE SEQUENCE [MRNA]</scope>
    <source>
        <tissue>Venom duct</tissue>
    </source>
</reference>
<dbReference type="EMBL" id="AF214960">
    <property type="protein sequence ID" value="AAG60388.1"/>
    <property type="molecule type" value="mRNA"/>
</dbReference>
<dbReference type="ConoServer" id="647">
    <property type="toxin name" value="Pn-B02 precursor"/>
</dbReference>
<dbReference type="GO" id="GO:0005576">
    <property type="term" value="C:extracellular region"/>
    <property type="evidence" value="ECO:0007669"/>
    <property type="project" value="UniProtKB-SubCell"/>
</dbReference>
<dbReference type="GO" id="GO:0090729">
    <property type="term" value="F:toxin activity"/>
    <property type="evidence" value="ECO:0007669"/>
    <property type="project" value="UniProtKB-KW"/>
</dbReference>
<dbReference type="InterPro" id="IPR031565">
    <property type="entry name" value="T-conotoxin"/>
</dbReference>
<dbReference type="Pfam" id="PF16981">
    <property type="entry name" value="Chi-conotoxin"/>
    <property type="match status" value="1"/>
</dbReference>
<keyword id="KW-0027">Amidation</keyword>
<keyword id="KW-0165">Cleavage on pair of basic residues</keyword>
<keyword id="KW-1015">Disulfide bond</keyword>
<keyword id="KW-0964">Secreted</keyword>
<keyword id="KW-0732">Signal</keyword>
<keyword id="KW-0800">Toxin</keyword>
<sequence length="62" mass="6969">MRCLPVFIILLLLIASAPSFDALPKTEDNVPLSSFHDNLKRTRRIHLNIRECCSDGWCCPAG</sequence>